<comment type="similarity">
    <text evidence="1">Belongs to the universal ribosomal protein uL16 family.</text>
</comment>
<organism>
    <name type="scientific">Methanococcus maripaludis (strain C6 / ATCC BAA-1332)</name>
    <dbReference type="NCBI Taxonomy" id="444158"/>
    <lineage>
        <taxon>Archaea</taxon>
        <taxon>Methanobacteriati</taxon>
        <taxon>Methanobacteriota</taxon>
        <taxon>Methanomada group</taxon>
        <taxon>Methanococci</taxon>
        <taxon>Methanococcales</taxon>
        <taxon>Methanococcaceae</taxon>
        <taxon>Methanococcus</taxon>
    </lineage>
</organism>
<feature type="chain" id="PRO_1000193767" description="Large ribosomal subunit protein uL16">
    <location>
        <begin position="1"/>
        <end position="173"/>
    </location>
</feature>
<proteinExistence type="inferred from homology"/>
<sequence length="173" mass="19476">MALRPARCYRTTERRSYTRKEYVRAVPQPKVVHYVMGNSSVEFPVEVQLISKSDILIRHNALESSRIAGNKYILRECGRTGYLFNIRVYPHEILRENKMAAGAGADRISDGMRLSFGKAVGTAAKVKKGQEIITIGVNPEKFYAAKEALRRCSMKLPTACKIVVTKGQDLIRD</sequence>
<evidence type="ECO:0000255" key="1">
    <source>
        <dbReference type="HAMAP-Rule" id="MF_00448"/>
    </source>
</evidence>
<evidence type="ECO:0000305" key="2"/>
<gene>
    <name evidence="1" type="primary">rpl10e</name>
    <name type="ordered locus">MmarC6_1385</name>
</gene>
<name>RL10E_METM6</name>
<reference key="1">
    <citation type="submission" date="2007-10" db="EMBL/GenBank/DDBJ databases">
        <title>Complete sequence of Methanococcus maripaludis C6.</title>
        <authorList>
            <consortium name="US DOE Joint Genome Institute"/>
            <person name="Copeland A."/>
            <person name="Lucas S."/>
            <person name="Lapidus A."/>
            <person name="Barry K."/>
            <person name="Glavina del Rio T."/>
            <person name="Dalin E."/>
            <person name="Tice H."/>
            <person name="Pitluck S."/>
            <person name="Clum A."/>
            <person name="Schmutz J."/>
            <person name="Larimer F."/>
            <person name="Land M."/>
            <person name="Hauser L."/>
            <person name="Kyrpides N."/>
            <person name="Mikhailova N."/>
            <person name="Sieprawska-Lupa M."/>
            <person name="Whitman W.B."/>
            <person name="Richardson P."/>
        </authorList>
    </citation>
    <scope>NUCLEOTIDE SEQUENCE [LARGE SCALE GENOMIC DNA]</scope>
    <source>
        <strain>C6 / ATCC BAA-1332</strain>
    </source>
</reference>
<accession>A9AA25</accession>
<dbReference type="EMBL" id="CP000867">
    <property type="protein sequence ID" value="ABX02198.1"/>
    <property type="molecule type" value="Genomic_DNA"/>
</dbReference>
<dbReference type="SMR" id="A9AA25"/>
<dbReference type="STRING" id="444158.MmarC6_1385"/>
<dbReference type="KEGG" id="mmx:MmarC6_1385"/>
<dbReference type="eggNOG" id="arCOG04113">
    <property type="taxonomic scope" value="Archaea"/>
</dbReference>
<dbReference type="HOGENOM" id="CLU_084051_0_2_2"/>
<dbReference type="OrthoDB" id="30538at2157"/>
<dbReference type="PhylomeDB" id="A9AA25"/>
<dbReference type="GO" id="GO:1990904">
    <property type="term" value="C:ribonucleoprotein complex"/>
    <property type="evidence" value="ECO:0007669"/>
    <property type="project" value="UniProtKB-KW"/>
</dbReference>
<dbReference type="GO" id="GO:0005840">
    <property type="term" value="C:ribosome"/>
    <property type="evidence" value="ECO:0007669"/>
    <property type="project" value="UniProtKB-KW"/>
</dbReference>
<dbReference type="GO" id="GO:0003735">
    <property type="term" value="F:structural constituent of ribosome"/>
    <property type="evidence" value="ECO:0007669"/>
    <property type="project" value="InterPro"/>
</dbReference>
<dbReference type="GO" id="GO:0006412">
    <property type="term" value="P:translation"/>
    <property type="evidence" value="ECO:0007669"/>
    <property type="project" value="UniProtKB-UniRule"/>
</dbReference>
<dbReference type="CDD" id="cd01433">
    <property type="entry name" value="Ribosomal_L16_L10e"/>
    <property type="match status" value="1"/>
</dbReference>
<dbReference type="Gene3D" id="3.90.1170.10">
    <property type="entry name" value="Ribosomal protein L10e/L16"/>
    <property type="match status" value="1"/>
</dbReference>
<dbReference type="HAMAP" id="MF_00448">
    <property type="entry name" value="Ribosomal_uL16_arch"/>
    <property type="match status" value="1"/>
</dbReference>
<dbReference type="InterPro" id="IPR047873">
    <property type="entry name" value="Ribosomal_uL16"/>
</dbReference>
<dbReference type="InterPro" id="IPR022981">
    <property type="entry name" value="Ribosomal_uL16_arc"/>
</dbReference>
<dbReference type="InterPro" id="IPR018255">
    <property type="entry name" value="Ribosomal_uL16_CS_euk_arc"/>
</dbReference>
<dbReference type="InterPro" id="IPR016180">
    <property type="entry name" value="Ribosomal_uL16_dom"/>
</dbReference>
<dbReference type="InterPro" id="IPR001197">
    <property type="entry name" value="Ribosomal_uL16_euk_arch"/>
</dbReference>
<dbReference type="InterPro" id="IPR036920">
    <property type="entry name" value="Ribosomal_uL16_sf"/>
</dbReference>
<dbReference type="NCBIfam" id="NF003239">
    <property type="entry name" value="PRK04199.1-4"/>
    <property type="match status" value="1"/>
</dbReference>
<dbReference type="NCBIfam" id="TIGR00279">
    <property type="entry name" value="uL16_euk_arch"/>
    <property type="match status" value="1"/>
</dbReference>
<dbReference type="PANTHER" id="PTHR11726">
    <property type="entry name" value="60S RIBOSOMAL PROTEIN L10"/>
    <property type="match status" value="1"/>
</dbReference>
<dbReference type="Pfam" id="PF00252">
    <property type="entry name" value="Ribosomal_L16"/>
    <property type="match status" value="1"/>
</dbReference>
<dbReference type="PIRSF" id="PIRSF005590">
    <property type="entry name" value="Ribosomal_L10"/>
    <property type="match status" value="1"/>
</dbReference>
<dbReference type="SUPFAM" id="SSF54686">
    <property type="entry name" value="Ribosomal protein L16p/L10e"/>
    <property type="match status" value="1"/>
</dbReference>
<dbReference type="PROSITE" id="PS01257">
    <property type="entry name" value="RIBOSOMAL_L10E"/>
    <property type="match status" value="1"/>
</dbReference>
<protein>
    <recommendedName>
        <fullName evidence="1">Large ribosomal subunit protein uL16</fullName>
    </recommendedName>
    <alternativeName>
        <fullName evidence="2">50S ribosomal protein L10e</fullName>
    </alternativeName>
</protein>
<keyword id="KW-0687">Ribonucleoprotein</keyword>
<keyword id="KW-0689">Ribosomal protein</keyword>